<keyword id="KW-0025">Alternative splicing</keyword>
<keyword id="KW-0029">Amino-acid transport</keyword>
<keyword id="KW-1003">Cell membrane</keyword>
<keyword id="KW-0256">Endoplasmic reticulum</keyword>
<keyword id="KW-0325">Glycoprotein</keyword>
<keyword id="KW-0472">Membrane</keyword>
<keyword id="KW-0597">Phosphoprotein</keyword>
<keyword id="KW-1267">Proteomics identification</keyword>
<keyword id="KW-1185">Reference proteome</keyword>
<keyword id="KW-0812">Transmembrane</keyword>
<keyword id="KW-1133">Transmembrane helix</keyword>
<keyword id="KW-0813">Transport</keyword>
<feature type="chain" id="PRO_0000218640" description="Large neutral amino acids transporter small subunit 3">
    <location>
        <begin position="1"/>
        <end position="559"/>
    </location>
</feature>
<feature type="transmembrane region" description="Helical" evidence="2">
    <location>
        <begin position="20"/>
        <end position="40"/>
    </location>
</feature>
<feature type="transmembrane region" description="Helical" evidence="2">
    <location>
        <begin position="78"/>
        <end position="98"/>
    </location>
</feature>
<feature type="transmembrane region" description="Helical" evidence="2">
    <location>
        <begin position="105"/>
        <end position="124"/>
    </location>
</feature>
<feature type="transmembrane region" description="Helical" evidence="2">
    <location>
        <begin position="131"/>
        <end position="151"/>
    </location>
</feature>
<feature type="transmembrane region" description="Helical" evidence="2">
    <location>
        <begin position="168"/>
        <end position="188"/>
    </location>
</feature>
<feature type="transmembrane region" description="Helical" evidence="2">
    <location>
        <begin position="191"/>
        <end position="211"/>
    </location>
</feature>
<feature type="transmembrane region" description="Helical" evidence="2">
    <location>
        <begin position="304"/>
        <end position="324"/>
    </location>
</feature>
<feature type="transmembrane region" description="Helical" evidence="2">
    <location>
        <begin position="357"/>
        <end position="377"/>
    </location>
</feature>
<feature type="transmembrane region" description="Helical" evidence="2">
    <location>
        <begin position="419"/>
        <end position="439"/>
    </location>
</feature>
<feature type="transmembrane region" description="Helical" evidence="2">
    <location>
        <begin position="446"/>
        <end position="466"/>
    </location>
</feature>
<feature type="transmembrane region" description="Helical" evidence="2">
    <location>
        <begin position="485"/>
        <end position="505"/>
    </location>
</feature>
<feature type="transmembrane region" description="Helical" evidence="2">
    <location>
        <begin position="510"/>
        <end position="530"/>
    </location>
</feature>
<feature type="modified residue" description="Phosphoserine" evidence="11">
    <location>
        <position position="237"/>
    </location>
</feature>
<feature type="modified residue" description="Phosphoserine" evidence="11">
    <location>
        <position position="262"/>
    </location>
</feature>
<feature type="modified residue" description="Phosphoserine" evidence="11 12">
    <location>
        <position position="267"/>
    </location>
</feature>
<feature type="glycosylation site" description="N-linked (GlcNAc...) asparagine" evidence="2">
    <location>
        <position position="57"/>
    </location>
</feature>
<feature type="glycosylation site" description="N-linked (GlcNAc...) asparagine" evidence="2">
    <location>
        <position position="212"/>
    </location>
</feature>
<feature type="glycosylation site" description="N-linked (GlcNAc...) asparagine" evidence="2">
    <location>
        <position position="229"/>
    </location>
</feature>
<feature type="splice variant" id="VSP_051620" description="In isoform 2." evidence="6">
    <original>NLGLLLFSLLGFLLPSYLFYYRARLQQEYAANGMGPLKVLSGSEVTA</original>
    <variation>RARVGVGGAGATLLGAGVGPCMWCHPSLISARGTSEVSNLQVSKLSAF</variation>
    <location>
        <begin position="513"/>
        <end position="559"/>
    </location>
</feature>
<feature type="sequence variant" id="VAR_053670" description="In dbSNP:rs17151933.">
    <original>G</original>
    <variation>V</variation>
    <location>
        <position position="238"/>
    </location>
</feature>
<feature type="sequence variant" id="VAR_053671" description="In dbSNP:rs34746107.">
    <original>H</original>
    <variation>Y</variation>
    <location>
        <position position="443"/>
    </location>
</feature>
<evidence type="ECO:0000250" key="1">
    <source>
        <dbReference type="UniProtKB" id="Q8BSM7"/>
    </source>
</evidence>
<evidence type="ECO:0000255" key="2"/>
<evidence type="ECO:0000269" key="3">
    <source>
    </source>
</evidence>
<evidence type="ECO:0000269" key="4">
    <source>
    </source>
</evidence>
<evidence type="ECO:0000269" key="5">
    <source>
    </source>
</evidence>
<evidence type="ECO:0000303" key="6">
    <source>
    </source>
</evidence>
<evidence type="ECO:0000305" key="7"/>
<evidence type="ECO:0000312" key="8">
    <source>
        <dbReference type="EMBL" id="AAC33004.1"/>
    </source>
</evidence>
<evidence type="ECO:0000312" key="9">
    <source>
        <dbReference type="EMBL" id="AAH01639.1"/>
    </source>
</evidence>
<evidence type="ECO:0000312" key="10">
    <source>
        <dbReference type="EMBL" id="BAD00152.1"/>
    </source>
</evidence>
<evidence type="ECO:0007744" key="11">
    <source>
    </source>
</evidence>
<evidence type="ECO:0007744" key="12">
    <source>
    </source>
</evidence>
<proteinExistence type="evidence at protein level"/>
<sequence>MAPTLQQAYRRRWWMACTAVLENLFFSAVLLGWGSLLIILKNEGFYSSTCPAESSTNTTQDEQRRWPGCDQQDEMLNLGFTIGSFVLSATTLPLGILMDRFGPRPVRLVGSACFTASCTLMALASRDVEALSPLIFLALSLNGFGGICLTFTSLTLPNMFGNLRSTLMALMIGSYASSAITFPGIKLIYDAGVAFVVIMFTWSGLACLIFLNCTLNWPIEAFPAPEEVNYTKKIKLSGLALDHKVTGDLFYTHVTTMGQRLSQKAPSLEDGSDAFMSPQDVRGTSENLPERSVPLRKSLCSPTFLWSLLTMGMTQLRIIFYMAAVNKMLEYLVTGGQEHETNEQQQKVAETVGFYSSVFGAMQLLCLLTCPLIGYIMDWRIKDCVDAPTQGTVLGDARDGVATKSIRPRYCKIQKLTNAISAFTLTNLLLVGFGITCLINNLHLQFVTFVLHTIVRGFFHSACGSLYAAVFPSNHFGTLTGLQSLISAVFALLQQPLFMAMVGPLKGEPFWVNLGLLLFSLLGFLLPSYLFYYRARLQQEYAANGMGPLKVLSGSEVTA</sequence>
<organism>
    <name type="scientific">Homo sapiens</name>
    <name type="common">Human</name>
    <dbReference type="NCBI Taxonomy" id="9606"/>
    <lineage>
        <taxon>Eukaryota</taxon>
        <taxon>Metazoa</taxon>
        <taxon>Chordata</taxon>
        <taxon>Craniata</taxon>
        <taxon>Vertebrata</taxon>
        <taxon>Euteleostomi</taxon>
        <taxon>Mammalia</taxon>
        <taxon>Eutheria</taxon>
        <taxon>Euarchontoglires</taxon>
        <taxon>Primates</taxon>
        <taxon>Haplorrhini</taxon>
        <taxon>Catarrhini</taxon>
        <taxon>Hominidae</taxon>
        <taxon>Homo</taxon>
    </lineage>
</organism>
<accession>O75387</accession>
<dbReference type="EMBL" id="AF045584">
    <property type="protein sequence ID" value="AAC33004.1"/>
    <property type="molecule type" value="mRNA"/>
</dbReference>
<dbReference type="EMBL" id="AB103033">
    <property type="protein sequence ID" value="BAD00152.1"/>
    <property type="molecule type" value="mRNA"/>
</dbReference>
<dbReference type="EMBL" id="BC001639">
    <property type="protein sequence ID" value="AAH01639.1"/>
    <property type="molecule type" value="mRNA"/>
</dbReference>
<dbReference type="CCDS" id="CCDS7958.1">
    <molecule id="O75387-1"/>
</dbReference>
<dbReference type="RefSeq" id="NP_001185739.1">
    <molecule id="O75387-1"/>
    <property type="nucleotide sequence ID" value="NM_001198810.2"/>
</dbReference>
<dbReference type="RefSeq" id="NP_003618.1">
    <molecule id="O75387-1"/>
    <property type="nucleotide sequence ID" value="NM_003627.6"/>
</dbReference>
<dbReference type="RefSeq" id="XP_016873940.1">
    <property type="nucleotide sequence ID" value="XM_017018451.1"/>
</dbReference>
<dbReference type="BioGRID" id="114073">
    <property type="interactions" value="18"/>
</dbReference>
<dbReference type="DIP" id="DIP-47272N"/>
<dbReference type="FunCoup" id="O75387">
    <property type="interactions" value="249"/>
</dbReference>
<dbReference type="IntAct" id="O75387">
    <property type="interactions" value="11"/>
</dbReference>
<dbReference type="MINT" id="O75387"/>
<dbReference type="STRING" id="9606.ENSP00000278426"/>
<dbReference type="BindingDB" id="O75387"/>
<dbReference type="ChEMBL" id="CHEMBL4148"/>
<dbReference type="TCDB" id="2.A.1.44.1">
    <property type="family name" value="the major facilitator superfamily (mfs)"/>
</dbReference>
<dbReference type="GlyCosmos" id="O75387">
    <property type="glycosylation" value="3 sites, No reported glycans"/>
</dbReference>
<dbReference type="GlyGen" id="O75387">
    <property type="glycosylation" value="3 sites, 1 N-linked glycan (1 site)"/>
</dbReference>
<dbReference type="iPTMnet" id="O75387"/>
<dbReference type="PhosphoSitePlus" id="O75387"/>
<dbReference type="SwissPalm" id="O75387"/>
<dbReference type="BioMuta" id="SLC43A1"/>
<dbReference type="jPOST" id="O75387"/>
<dbReference type="MassIVE" id="O75387"/>
<dbReference type="PaxDb" id="9606-ENSP00000278426"/>
<dbReference type="PeptideAtlas" id="O75387"/>
<dbReference type="ProteomicsDB" id="49960">
    <molecule id="O75387-1"/>
</dbReference>
<dbReference type="ProteomicsDB" id="49961">
    <molecule id="O75387-2"/>
</dbReference>
<dbReference type="Antibodypedia" id="14174">
    <property type="antibodies" value="108 antibodies from 23 providers"/>
</dbReference>
<dbReference type="DNASU" id="8501"/>
<dbReference type="Ensembl" id="ENST00000278426.8">
    <molecule id="O75387-1"/>
    <property type="protein sequence ID" value="ENSP00000278426.3"/>
    <property type="gene ID" value="ENSG00000149150.9"/>
</dbReference>
<dbReference type="Ensembl" id="ENST00000528450.5">
    <molecule id="O75387-1"/>
    <property type="protein sequence ID" value="ENSP00000435673.1"/>
    <property type="gene ID" value="ENSG00000149150.9"/>
</dbReference>
<dbReference type="GeneID" id="8501"/>
<dbReference type="KEGG" id="hsa:8501"/>
<dbReference type="MANE-Select" id="ENST00000278426.8">
    <property type="protein sequence ID" value="ENSP00000278426.3"/>
    <property type="RefSeq nucleotide sequence ID" value="NM_003627.6"/>
    <property type="RefSeq protein sequence ID" value="NP_003618.1"/>
</dbReference>
<dbReference type="UCSC" id="uc001nkk.4">
    <molecule id="O75387-1"/>
    <property type="organism name" value="human"/>
</dbReference>
<dbReference type="AGR" id="HGNC:9225"/>
<dbReference type="CTD" id="8501"/>
<dbReference type="DisGeNET" id="8501"/>
<dbReference type="GeneCards" id="SLC43A1"/>
<dbReference type="HGNC" id="HGNC:9225">
    <property type="gene designation" value="SLC43A1"/>
</dbReference>
<dbReference type="HPA" id="ENSG00000149150">
    <property type="expression patterns" value="Group enriched (liver, pancreas)"/>
</dbReference>
<dbReference type="MIM" id="603733">
    <property type="type" value="gene"/>
</dbReference>
<dbReference type="neXtProt" id="NX_O75387"/>
<dbReference type="OpenTargets" id="ENSG00000149150"/>
<dbReference type="PharmGKB" id="PA33549"/>
<dbReference type="VEuPathDB" id="HostDB:ENSG00000149150"/>
<dbReference type="eggNOG" id="ENOG502QUZ1">
    <property type="taxonomic scope" value="Eukaryota"/>
</dbReference>
<dbReference type="GeneTree" id="ENSGT00940000153576"/>
<dbReference type="HOGENOM" id="CLU_035676_0_0_1"/>
<dbReference type="InParanoid" id="O75387"/>
<dbReference type="OMA" id="RMSFDAF"/>
<dbReference type="OrthoDB" id="330047at2759"/>
<dbReference type="PAN-GO" id="O75387">
    <property type="GO annotations" value="3 GO annotations based on evolutionary models"/>
</dbReference>
<dbReference type="PhylomeDB" id="O75387"/>
<dbReference type="TreeFam" id="TF328358"/>
<dbReference type="PathwayCommons" id="O75387"/>
<dbReference type="Reactome" id="R-HSA-352230">
    <property type="pathway name" value="Amino acid transport across the plasma membrane"/>
</dbReference>
<dbReference type="SABIO-RK" id="O75387"/>
<dbReference type="SignaLink" id="O75387"/>
<dbReference type="BioGRID-ORCS" id="8501">
    <property type="hits" value="17 hits in 1159 CRISPR screens"/>
</dbReference>
<dbReference type="ChiTaRS" id="SLC43A1">
    <property type="organism name" value="human"/>
</dbReference>
<dbReference type="GeneWiki" id="SLC43A1"/>
<dbReference type="GenomeRNAi" id="8501"/>
<dbReference type="Pharos" id="O75387">
    <property type="development level" value="Tbio"/>
</dbReference>
<dbReference type="PRO" id="PR:O75387"/>
<dbReference type="Proteomes" id="UP000005640">
    <property type="component" value="Chromosome 11"/>
</dbReference>
<dbReference type="RNAct" id="O75387">
    <property type="molecule type" value="protein"/>
</dbReference>
<dbReference type="Bgee" id="ENSG00000149150">
    <property type="expression patterns" value="Expressed in body of pancreas and 127 other cell types or tissues"/>
</dbReference>
<dbReference type="ExpressionAtlas" id="O75387">
    <property type="expression patterns" value="baseline and differential"/>
</dbReference>
<dbReference type="GO" id="GO:0016324">
    <property type="term" value="C:apical plasma membrane"/>
    <property type="evidence" value="ECO:0000314"/>
    <property type="project" value="UniProtKB"/>
</dbReference>
<dbReference type="GO" id="GO:0005789">
    <property type="term" value="C:endoplasmic reticulum membrane"/>
    <property type="evidence" value="ECO:0007669"/>
    <property type="project" value="UniProtKB-SubCell"/>
</dbReference>
<dbReference type="GO" id="GO:0005886">
    <property type="term" value="C:plasma membrane"/>
    <property type="evidence" value="ECO:0000250"/>
    <property type="project" value="UniProtKB"/>
</dbReference>
<dbReference type="GO" id="GO:0098846">
    <property type="term" value="C:podocyte foot"/>
    <property type="evidence" value="ECO:0000314"/>
    <property type="project" value="UniProtKB"/>
</dbReference>
<dbReference type="GO" id="GO:0015171">
    <property type="term" value="F:amino acid transmembrane transporter activity"/>
    <property type="evidence" value="ECO:0000304"/>
    <property type="project" value="Reactome"/>
</dbReference>
<dbReference type="GO" id="GO:0015179">
    <property type="term" value="F:L-amino acid transmembrane transporter activity"/>
    <property type="evidence" value="ECO:0000318"/>
    <property type="project" value="GO_Central"/>
</dbReference>
<dbReference type="GO" id="GO:0015188">
    <property type="term" value="F:L-isoleucine transmembrane transporter activity"/>
    <property type="evidence" value="ECO:0000314"/>
    <property type="project" value="UniProtKB"/>
</dbReference>
<dbReference type="GO" id="GO:0015190">
    <property type="term" value="F:L-leucine transmembrane transporter activity"/>
    <property type="evidence" value="ECO:0000314"/>
    <property type="project" value="UniProtKB"/>
</dbReference>
<dbReference type="GO" id="GO:0005304">
    <property type="term" value="F:L-valine transmembrane transporter activity"/>
    <property type="evidence" value="ECO:0000314"/>
    <property type="project" value="UniProtKB"/>
</dbReference>
<dbReference type="GO" id="GO:0015175">
    <property type="term" value="F:neutral L-amino acid transmembrane transporter activity"/>
    <property type="evidence" value="ECO:0000314"/>
    <property type="project" value="UniProtKB"/>
</dbReference>
<dbReference type="GO" id="GO:0006865">
    <property type="term" value="P:amino acid transport"/>
    <property type="evidence" value="ECO:0000304"/>
    <property type="project" value="Reactome"/>
</dbReference>
<dbReference type="GO" id="GO:0015818">
    <property type="term" value="P:isoleucine transport"/>
    <property type="evidence" value="ECO:0000314"/>
    <property type="project" value="UniProtKB"/>
</dbReference>
<dbReference type="GO" id="GO:0015820">
    <property type="term" value="P:L-leucine transport"/>
    <property type="evidence" value="ECO:0000314"/>
    <property type="project" value="UniProtKB"/>
</dbReference>
<dbReference type="GO" id="GO:1903785">
    <property type="term" value="P:L-valine transmembrane transport"/>
    <property type="evidence" value="ECO:0000314"/>
    <property type="project" value="UniProtKB"/>
</dbReference>
<dbReference type="GO" id="GO:0051956">
    <property type="term" value="P:negative regulation of amino acid transport"/>
    <property type="evidence" value="ECO:0000314"/>
    <property type="project" value="ARUK-UCL"/>
</dbReference>
<dbReference type="GO" id="GO:1905533">
    <property type="term" value="P:negative regulation of L-leucine import across plasma membrane"/>
    <property type="evidence" value="ECO:0000314"/>
    <property type="project" value="ARUK-UCL"/>
</dbReference>
<dbReference type="GO" id="GO:0015804">
    <property type="term" value="P:neutral amino acid transport"/>
    <property type="evidence" value="ECO:0000314"/>
    <property type="project" value="UniProtKB"/>
</dbReference>
<dbReference type="Gene3D" id="1.20.1250.20">
    <property type="entry name" value="MFS general substrate transporter like domains"/>
    <property type="match status" value="1"/>
</dbReference>
<dbReference type="InterPro" id="IPR011701">
    <property type="entry name" value="MFS"/>
</dbReference>
<dbReference type="InterPro" id="IPR036259">
    <property type="entry name" value="MFS_trans_sf"/>
</dbReference>
<dbReference type="PANTHER" id="PTHR20766:SF0">
    <property type="entry name" value="LARGE NEUTRAL AMINO ACIDS TRANSPORTER SMALL SUBUNIT 3"/>
    <property type="match status" value="1"/>
</dbReference>
<dbReference type="PANTHER" id="PTHR20766">
    <property type="entry name" value="LARGE NEUTRAL AMINO ACIDS TRANSPORTER SMALL SUBUNIT 4-LIKE ISOFORM X1"/>
    <property type="match status" value="1"/>
</dbReference>
<dbReference type="Pfam" id="PF07690">
    <property type="entry name" value="MFS_1"/>
    <property type="match status" value="1"/>
</dbReference>
<dbReference type="SUPFAM" id="SSF103473">
    <property type="entry name" value="MFS general substrate transporter"/>
    <property type="match status" value="1"/>
</dbReference>
<gene>
    <name evidence="9" type="primary">SLC43A1</name>
    <name evidence="10" type="synonym">LAT3</name>
    <name evidence="6" type="synonym">PB39</name>
    <name evidence="6" type="synonym">POV1</name>
</gene>
<protein>
    <recommendedName>
        <fullName evidence="7">Large neutral amino acids transporter small subunit 3</fullName>
    </recommendedName>
    <alternativeName>
        <fullName>L-type amino acid transporter 3</fullName>
    </alternativeName>
    <alternativeName>
        <fullName>Prostate cancer overexpressed gene 1 protein</fullName>
    </alternativeName>
    <alternativeName>
        <fullName>Solute carrier family 43 member 1</fullName>
    </alternativeName>
</protein>
<name>LAT3_HUMAN</name>
<reference evidence="7 8" key="1">
    <citation type="journal article" date="1998" name="Genomics">
        <title>cDNA sequencing and analysis of POV1 (PB39): a novel gene up-regulated in prostate cancer.</title>
        <authorList>
            <person name="Cole K.A."/>
            <person name="Chuaqui R.F."/>
            <person name="Katz K."/>
            <person name="Pack S."/>
            <person name="Zhuang Z."/>
            <person name="Cole C.E."/>
            <person name="Lyne J.C."/>
            <person name="Linehan W.M."/>
            <person name="Liotta L.A."/>
            <person name="Emmert-Buck M.R."/>
        </authorList>
    </citation>
    <scope>NUCLEOTIDE SEQUENCE [MRNA] (ISOFORMS 1 AND 2)</scope>
    <scope>TISSUE SPECIFICITY</scope>
</reference>
<reference evidence="7 10" key="2">
    <citation type="journal article" date="2003" name="J. Biol. Chem.">
        <title>Identification of a novel system L amino acid transporter structurally distinct from heterodimeric amino acid transporters.</title>
        <authorList>
            <person name="Babu E."/>
            <person name="Kanai Y."/>
            <person name="Chairoungdua A."/>
            <person name="Kim D.K."/>
            <person name="Iribe Y."/>
            <person name="Tangtrongsup S."/>
            <person name="Jutabha P."/>
            <person name="Li Y."/>
            <person name="Ahmed N."/>
            <person name="Sakamoto S."/>
            <person name="Anzai N."/>
            <person name="Nagamori S."/>
            <person name="Endou H."/>
        </authorList>
    </citation>
    <scope>NUCLEOTIDE SEQUENCE [MRNA] (ISOFORM 1)</scope>
    <scope>FUNCTION</scope>
    <scope>TRANSPORTER ACTIVITY</scope>
    <scope>TISSUE SPECIFICITY</scope>
    <source>
        <tissue evidence="10">Liver</tissue>
    </source>
</reference>
<reference evidence="7 9" key="3">
    <citation type="journal article" date="2004" name="Genome Res.">
        <title>The status, quality, and expansion of the NIH full-length cDNA project: the Mammalian Gene Collection (MGC).</title>
        <authorList>
            <consortium name="The MGC Project Team"/>
        </authorList>
    </citation>
    <scope>NUCLEOTIDE SEQUENCE [LARGE SCALE MRNA] (ISOFORM 1)</scope>
    <source>
        <tissue evidence="9">Colon</tissue>
    </source>
</reference>
<reference evidence="7" key="4">
    <citation type="journal article" date="1997" name="Urology">
        <title>Identification of a novel transcript up-regulated in a clinically aggressive prostate carcinoma.</title>
        <authorList>
            <person name="Chuaqui R.F."/>
            <person name="Englert C.R."/>
            <person name="Strup S.E."/>
            <person name="Vocke C.D."/>
            <person name="Zhuang Z."/>
            <person name="Duray P.H."/>
            <person name="Bostwick D.G."/>
            <person name="Linehan W.M."/>
            <person name="Liotta L.A."/>
            <person name="Emmert-Buck M.R."/>
        </authorList>
    </citation>
    <scope>PARTIAL NUCLEOTIDE SEQUENCE (ISOFORM 1)</scope>
</reference>
<reference key="5">
    <citation type="journal article" date="2009" name="J. Am. Soc. Nephrol.">
        <title>Amino acid transporter LAT3 is required for podocyte development and function.</title>
        <authorList>
            <person name="Sekine Y."/>
            <person name="Nishibori Y."/>
            <person name="Akimoto Y."/>
            <person name="Kudo A."/>
            <person name="Ito N."/>
            <person name="Fukuhara D."/>
            <person name="Kurayama R."/>
            <person name="Higashihara E."/>
            <person name="Babu E."/>
            <person name="Kanai Y."/>
            <person name="Asanuma K."/>
            <person name="Nagata M."/>
            <person name="Majumdar A."/>
            <person name="Tryggvason K."/>
            <person name="Yan K."/>
        </authorList>
    </citation>
    <scope>TISSUE SPECIFICITY</scope>
    <scope>SUBCELLULAR LOCATION</scope>
    <scope>DEVELOPMENTAL STAGE</scope>
</reference>
<reference key="6">
    <citation type="journal article" date="2013" name="J. Proteome Res.">
        <title>Toward a comprehensive characterization of a human cancer cell phosphoproteome.</title>
        <authorList>
            <person name="Zhou H."/>
            <person name="Di Palma S."/>
            <person name="Preisinger C."/>
            <person name="Peng M."/>
            <person name="Polat A.N."/>
            <person name="Heck A.J."/>
            <person name="Mohammed S."/>
        </authorList>
    </citation>
    <scope>PHOSPHORYLATION [LARGE SCALE ANALYSIS] AT SER-237; SER-262 AND SER-267</scope>
    <scope>IDENTIFICATION BY MASS SPECTROMETRY [LARGE SCALE ANALYSIS]</scope>
    <source>
        <tissue>Erythroleukemia</tissue>
    </source>
</reference>
<reference key="7">
    <citation type="journal article" date="2014" name="J. Proteomics">
        <title>An enzyme assisted RP-RPLC approach for in-depth analysis of human liver phosphoproteome.</title>
        <authorList>
            <person name="Bian Y."/>
            <person name="Song C."/>
            <person name="Cheng K."/>
            <person name="Dong M."/>
            <person name="Wang F."/>
            <person name="Huang J."/>
            <person name="Sun D."/>
            <person name="Wang L."/>
            <person name="Ye M."/>
            <person name="Zou H."/>
        </authorList>
    </citation>
    <scope>PHOSPHORYLATION [LARGE SCALE ANALYSIS] AT SER-267</scope>
    <scope>IDENTIFICATION BY MASS SPECTROMETRY [LARGE SCALE ANALYSIS]</scope>
    <source>
        <tissue>Liver</tissue>
    </source>
</reference>
<comment type="function">
    <text evidence="3">Uniport that mediates the transport of neutral amino acids such as L-leucine, L-isoleucine, L-valine, and L-phenylalanine (PubMed:12930836). The transport activity is sodium ions-independent, electroneutral and mediated by a facilitated diffusion (PubMed:12930836).</text>
</comment>
<comment type="catalytic activity">
    <reaction evidence="3">
        <text>D-leucine(in) = D-leucine(out)</text>
        <dbReference type="Rhea" id="RHEA:73015"/>
        <dbReference type="ChEBI" id="CHEBI:143079"/>
    </reaction>
</comment>
<comment type="catalytic activity">
    <reaction evidence="3">
        <text>L-leucine(in) = L-leucine(out)</text>
        <dbReference type="Rhea" id="RHEA:73011"/>
        <dbReference type="ChEBI" id="CHEBI:57427"/>
    </reaction>
</comment>
<comment type="catalytic activity">
    <reaction evidence="3">
        <text>L-isoleucine(in) = L-isoleucine(out)</text>
        <dbReference type="Rhea" id="RHEA:70943"/>
        <dbReference type="ChEBI" id="CHEBI:58045"/>
    </reaction>
</comment>
<comment type="catalytic activity">
    <reaction evidence="3">
        <text>L-methionine(in) = L-methionine(out)</text>
        <dbReference type="Rhea" id="RHEA:70939"/>
        <dbReference type="ChEBI" id="CHEBI:57844"/>
    </reaction>
</comment>
<comment type="catalytic activity">
    <reaction evidence="3">
        <text>L-phenylalanine(in) = L-phenylalanine(out)</text>
        <dbReference type="Rhea" id="RHEA:27950"/>
        <dbReference type="ChEBI" id="CHEBI:58095"/>
    </reaction>
</comment>
<comment type="catalytic activity">
    <reaction evidence="3">
        <text>L-valine(in) = L-valine(out)</text>
        <dbReference type="Rhea" id="RHEA:29703"/>
        <dbReference type="ChEBI" id="CHEBI:57762"/>
    </reaction>
</comment>
<comment type="interaction">
    <interactant intactId="EBI-9661945">
        <id>O75387</id>
    </interactant>
    <interactant intactId="EBI-1642333">
        <id>Q9BYV9</id>
        <label>BACH2</label>
    </interactant>
    <organismsDiffer>false</organismsDiffer>
    <experiments>3</experiments>
</comment>
<comment type="subcellular location">
    <subcellularLocation>
        <location evidence="1">Cell membrane</location>
        <topology evidence="2">Multi-pass membrane protein</topology>
    </subcellularLocation>
    <subcellularLocation>
        <location evidence="4">Apical cell membrane</location>
        <topology evidence="2">Multi-pass membrane protein</topology>
    </subcellularLocation>
    <subcellularLocation>
        <location evidence="1">Endoplasmic reticulum membrane</location>
        <topology evidence="2">Multi-pass membrane protein</topology>
    </subcellularLocation>
    <text evidence="1 4">Located in the apical plasma membrane of the podocyte foot processes (PubMed:19443642). Located in the plasma membrane of liver and skeletal muscle, and in the endoplasmic reticulum and in crystalline inclusions in pancreatic acinar cells (By similarity).</text>
</comment>
<comment type="alternative products">
    <event type="alternative splicing"/>
    <isoform>
        <id>O75387-1</id>
        <name evidence="5">1</name>
        <name evidence="6">2.3kb</name>
        <sequence type="displayed"/>
    </isoform>
    <isoform>
        <id>O75387-2</id>
        <name evidence="5">2</name>
        <name evidence="6">5kb</name>
        <sequence type="described" ref="VSP_051620"/>
    </isoform>
</comment>
<comment type="tissue specificity">
    <text evidence="3 4 5">Ubiquitously expressed in fetus and adult (PubMed:9722952). Highest expression in adult pancreas, liver, skeletal muscle (PubMed:12930836, PubMed:9722952). In fetus, highest expression in liver and lower levels in kidney, and lung (PubMed:12930836). Exclusively expressed in the glomeruli along the glomerular capillary walls (PubMed:19443642).</text>
</comment>
<comment type="developmental stage">
    <text evidence="4">Highly expressed in the capillary loop stage and very faintly in the S-shaped body stage of glomerulus in fetal kidney of 16 weeks of gestation.</text>
</comment>
<comment type="similarity">
    <text evidence="7">Belongs to the SLC43A transporter (TC 2.A.1.44) family.</text>
</comment>